<feature type="chain" id="PRO_1000096301" description="tRNA-specific 2-thiouridylase MnmA">
    <location>
        <begin position="1"/>
        <end position="367"/>
    </location>
</feature>
<feature type="region of interest" description="Interaction with target base in tRNA" evidence="1">
    <location>
        <begin position="98"/>
        <end position="100"/>
    </location>
</feature>
<feature type="region of interest" description="Interaction with tRNA" evidence="1">
    <location>
        <begin position="150"/>
        <end position="152"/>
    </location>
</feature>
<feature type="region of interest" description="Interaction with tRNA" evidence="1">
    <location>
        <begin position="312"/>
        <end position="313"/>
    </location>
</feature>
<feature type="active site" description="Nucleophile" evidence="1">
    <location>
        <position position="103"/>
    </location>
</feature>
<feature type="active site" description="Cysteine persulfide intermediate" evidence="1">
    <location>
        <position position="200"/>
    </location>
</feature>
<feature type="binding site" evidence="1">
    <location>
        <begin position="12"/>
        <end position="19"/>
    </location>
    <ligand>
        <name>ATP</name>
        <dbReference type="ChEBI" id="CHEBI:30616"/>
    </ligand>
</feature>
<feature type="binding site" evidence="1">
    <location>
        <position position="38"/>
    </location>
    <ligand>
        <name>ATP</name>
        <dbReference type="ChEBI" id="CHEBI:30616"/>
    </ligand>
</feature>
<feature type="binding site" evidence="1">
    <location>
        <position position="128"/>
    </location>
    <ligand>
        <name>ATP</name>
        <dbReference type="ChEBI" id="CHEBI:30616"/>
    </ligand>
</feature>
<feature type="site" description="Interaction with tRNA" evidence="1">
    <location>
        <position position="129"/>
    </location>
</feature>
<feature type="site" description="Interaction with tRNA" evidence="1">
    <location>
        <position position="345"/>
    </location>
</feature>
<feature type="disulfide bond" description="Alternate" evidence="1">
    <location>
        <begin position="103"/>
        <end position="200"/>
    </location>
</feature>
<gene>
    <name evidence="1" type="primary">mnmA</name>
    <name type="ordered locus">PMI0888</name>
</gene>
<dbReference type="EC" id="2.8.1.13" evidence="1"/>
<dbReference type="EMBL" id="AM942759">
    <property type="protein sequence ID" value="CAR41993.1"/>
    <property type="molecule type" value="Genomic_DNA"/>
</dbReference>
<dbReference type="RefSeq" id="WP_004247117.1">
    <property type="nucleotide sequence ID" value="NC_010554.1"/>
</dbReference>
<dbReference type="SMR" id="B4EVG2"/>
<dbReference type="EnsemblBacteria" id="CAR41993">
    <property type="protein sequence ID" value="CAR41993"/>
    <property type="gene ID" value="PMI0888"/>
</dbReference>
<dbReference type="GeneID" id="6803686"/>
<dbReference type="KEGG" id="pmr:PMI0888"/>
<dbReference type="eggNOG" id="COG0482">
    <property type="taxonomic scope" value="Bacteria"/>
</dbReference>
<dbReference type="HOGENOM" id="CLU_035188_1_0_6"/>
<dbReference type="Proteomes" id="UP000008319">
    <property type="component" value="Chromosome"/>
</dbReference>
<dbReference type="GO" id="GO:0005737">
    <property type="term" value="C:cytoplasm"/>
    <property type="evidence" value="ECO:0007669"/>
    <property type="project" value="UniProtKB-SubCell"/>
</dbReference>
<dbReference type="GO" id="GO:0005524">
    <property type="term" value="F:ATP binding"/>
    <property type="evidence" value="ECO:0007669"/>
    <property type="project" value="UniProtKB-KW"/>
</dbReference>
<dbReference type="GO" id="GO:0000049">
    <property type="term" value="F:tRNA binding"/>
    <property type="evidence" value="ECO:0007669"/>
    <property type="project" value="UniProtKB-KW"/>
</dbReference>
<dbReference type="GO" id="GO:0103016">
    <property type="term" value="F:tRNA-uridine 2-sulfurtransferase activity"/>
    <property type="evidence" value="ECO:0007669"/>
    <property type="project" value="UniProtKB-EC"/>
</dbReference>
<dbReference type="GO" id="GO:0002143">
    <property type="term" value="P:tRNA wobble position uridine thiolation"/>
    <property type="evidence" value="ECO:0007669"/>
    <property type="project" value="TreeGrafter"/>
</dbReference>
<dbReference type="CDD" id="cd01998">
    <property type="entry name" value="MnmA_TRMU-like"/>
    <property type="match status" value="1"/>
</dbReference>
<dbReference type="FunFam" id="2.30.30.280:FF:000001">
    <property type="entry name" value="tRNA-specific 2-thiouridylase MnmA"/>
    <property type="match status" value="1"/>
</dbReference>
<dbReference type="FunFam" id="2.40.30.10:FF:000023">
    <property type="entry name" value="tRNA-specific 2-thiouridylase MnmA"/>
    <property type="match status" value="1"/>
</dbReference>
<dbReference type="FunFam" id="3.40.50.620:FF:000004">
    <property type="entry name" value="tRNA-specific 2-thiouridylase MnmA"/>
    <property type="match status" value="1"/>
</dbReference>
<dbReference type="Gene3D" id="2.30.30.280">
    <property type="entry name" value="Adenine nucleotide alpha hydrolases-like domains"/>
    <property type="match status" value="1"/>
</dbReference>
<dbReference type="Gene3D" id="3.40.50.620">
    <property type="entry name" value="HUPs"/>
    <property type="match status" value="1"/>
</dbReference>
<dbReference type="Gene3D" id="2.40.30.10">
    <property type="entry name" value="Translation factors"/>
    <property type="match status" value="1"/>
</dbReference>
<dbReference type="HAMAP" id="MF_00144">
    <property type="entry name" value="tRNA_thiouridyl_MnmA"/>
    <property type="match status" value="1"/>
</dbReference>
<dbReference type="InterPro" id="IPR004506">
    <property type="entry name" value="MnmA-like"/>
</dbReference>
<dbReference type="InterPro" id="IPR046885">
    <property type="entry name" value="MnmA-like_C"/>
</dbReference>
<dbReference type="InterPro" id="IPR046884">
    <property type="entry name" value="MnmA-like_central"/>
</dbReference>
<dbReference type="InterPro" id="IPR023382">
    <property type="entry name" value="MnmA-like_central_sf"/>
</dbReference>
<dbReference type="InterPro" id="IPR014729">
    <property type="entry name" value="Rossmann-like_a/b/a_fold"/>
</dbReference>
<dbReference type="NCBIfam" id="NF001138">
    <property type="entry name" value="PRK00143.1"/>
    <property type="match status" value="1"/>
</dbReference>
<dbReference type="NCBIfam" id="TIGR00420">
    <property type="entry name" value="trmU"/>
    <property type="match status" value="1"/>
</dbReference>
<dbReference type="PANTHER" id="PTHR11933:SF5">
    <property type="entry name" value="MITOCHONDRIAL TRNA-SPECIFIC 2-THIOURIDYLASE 1"/>
    <property type="match status" value="1"/>
</dbReference>
<dbReference type="PANTHER" id="PTHR11933">
    <property type="entry name" value="TRNA 5-METHYLAMINOMETHYL-2-THIOURIDYLATE -METHYLTRANSFERASE"/>
    <property type="match status" value="1"/>
</dbReference>
<dbReference type="Pfam" id="PF03054">
    <property type="entry name" value="tRNA_Me_trans"/>
    <property type="match status" value="1"/>
</dbReference>
<dbReference type="Pfam" id="PF20258">
    <property type="entry name" value="tRNA_Me_trans_C"/>
    <property type="match status" value="1"/>
</dbReference>
<dbReference type="Pfam" id="PF20259">
    <property type="entry name" value="tRNA_Me_trans_M"/>
    <property type="match status" value="1"/>
</dbReference>
<dbReference type="SUPFAM" id="SSF52402">
    <property type="entry name" value="Adenine nucleotide alpha hydrolases-like"/>
    <property type="match status" value="1"/>
</dbReference>
<name>MNMA_PROMH</name>
<reference key="1">
    <citation type="journal article" date="2008" name="J. Bacteriol.">
        <title>Complete genome sequence of uropathogenic Proteus mirabilis, a master of both adherence and motility.</title>
        <authorList>
            <person name="Pearson M.M."/>
            <person name="Sebaihia M."/>
            <person name="Churcher C."/>
            <person name="Quail M.A."/>
            <person name="Seshasayee A.S."/>
            <person name="Luscombe N.M."/>
            <person name="Abdellah Z."/>
            <person name="Arrosmith C."/>
            <person name="Atkin B."/>
            <person name="Chillingworth T."/>
            <person name="Hauser H."/>
            <person name="Jagels K."/>
            <person name="Moule S."/>
            <person name="Mungall K."/>
            <person name="Norbertczak H."/>
            <person name="Rabbinowitsch E."/>
            <person name="Walker D."/>
            <person name="Whithead S."/>
            <person name="Thomson N.R."/>
            <person name="Rather P.N."/>
            <person name="Parkhill J."/>
            <person name="Mobley H.L.T."/>
        </authorList>
    </citation>
    <scope>NUCLEOTIDE SEQUENCE [LARGE SCALE GENOMIC DNA]</scope>
    <source>
        <strain>HI4320</strain>
    </source>
</reference>
<organism>
    <name type="scientific">Proteus mirabilis (strain HI4320)</name>
    <dbReference type="NCBI Taxonomy" id="529507"/>
    <lineage>
        <taxon>Bacteria</taxon>
        <taxon>Pseudomonadati</taxon>
        <taxon>Pseudomonadota</taxon>
        <taxon>Gammaproteobacteria</taxon>
        <taxon>Enterobacterales</taxon>
        <taxon>Morganellaceae</taxon>
        <taxon>Proteus</taxon>
    </lineage>
</organism>
<evidence type="ECO:0000255" key="1">
    <source>
        <dbReference type="HAMAP-Rule" id="MF_00144"/>
    </source>
</evidence>
<sequence>MSDNSQKKVIVGMSGGVDSSVSAYLLKEQGYQVVGLFMKNWEEDDDTEYCSASADLADAQAVCDKLGIELHTINFAAEYWDNVFEHFLSEYKAGRTPNPDILCNKEIKFKAFLEYAAEDLGADYIATGHYVRRRDIDGKSQLLRGVDNNKDQSYFLYTLSHQQIAQSLFPVGEMEKPEVRKIAEKLDLATAKKKDSTGICFIGERKFTDFLSRYLPAKPGPIVTVDGETIGEHQGLMYHTLGQRKGLGIGGTKEGSEDPWYVVDKDVANNILIVAQGHEHPRLMSVGLIAQQLHWVAREPITEAFRCTVKTRYRQADIPCTVTPLDEDKIEVRFDYPVAAVTPGQSAVFYQDEVCLGGGIIETRIQE</sequence>
<comment type="function">
    <text evidence="1">Catalyzes the 2-thiolation of uridine at the wobble position (U34) of tRNA(Lys), tRNA(Glu) and tRNA(Gln), leading to the formation of s(2)U34, the first step of tRNA-mnm(5)s(2)U34 synthesis. Sulfur is provided by IscS, via a sulfur-relay system. Binds ATP and its substrate tRNAs.</text>
</comment>
<comment type="catalytic activity">
    <reaction evidence="1">
        <text>S-sulfanyl-L-cysteinyl-[protein] + uridine(34) in tRNA + AH2 + ATP = 2-thiouridine(34) in tRNA + L-cysteinyl-[protein] + A + AMP + diphosphate + H(+)</text>
        <dbReference type="Rhea" id="RHEA:47032"/>
        <dbReference type="Rhea" id="RHEA-COMP:10131"/>
        <dbReference type="Rhea" id="RHEA-COMP:11726"/>
        <dbReference type="Rhea" id="RHEA-COMP:11727"/>
        <dbReference type="Rhea" id="RHEA-COMP:11728"/>
        <dbReference type="ChEBI" id="CHEBI:13193"/>
        <dbReference type="ChEBI" id="CHEBI:15378"/>
        <dbReference type="ChEBI" id="CHEBI:17499"/>
        <dbReference type="ChEBI" id="CHEBI:29950"/>
        <dbReference type="ChEBI" id="CHEBI:30616"/>
        <dbReference type="ChEBI" id="CHEBI:33019"/>
        <dbReference type="ChEBI" id="CHEBI:61963"/>
        <dbReference type="ChEBI" id="CHEBI:65315"/>
        <dbReference type="ChEBI" id="CHEBI:87170"/>
        <dbReference type="ChEBI" id="CHEBI:456215"/>
        <dbReference type="EC" id="2.8.1.13"/>
    </reaction>
</comment>
<comment type="subunit">
    <text evidence="1">Interacts with TusE.</text>
</comment>
<comment type="subcellular location">
    <subcellularLocation>
        <location evidence="1">Cytoplasm</location>
    </subcellularLocation>
</comment>
<comment type="similarity">
    <text evidence="1">Belongs to the MnmA/TRMU family.</text>
</comment>
<protein>
    <recommendedName>
        <fullName evidence="1">tRNA-specific 2-thiouridylase MnmA</fullName>
        <ecNumber evidence="1">2.8.1.13</ecNumber>
    </recommendedName>
</protein>
<proteinExistence type="inferred from homology"/>
<keyword id="KW-0067">ATP-binding</keyword>
<keyword id="KW-0963">Cytoplasm</keyword>
<keyword id="KW-1015">Disulfide bond</keyword>
<keyword id="KW-0547">Nucleotide-binding</keyword>
<keyword id="KW-1185">Reference proteome</keyword>
<keyword id="KW-0694">RNA-binding</keyword>
<keyword id="KW-0808">Transferase</keyword>
<keyword id="KW-0819">tRNA processing</keyword>
<keyword id="KW-0820">tRNA-binding</keyword>
<accession>B4EVG2</accession>